<evidence type="ECO:0000255" key="1">
    <source>
        <dbReference type="HAMAP-Rule" id="MF_00206"/>
    </source>
</evidence>
<evidence type="ECO:0000255" key="2">
    <source>
        <dbReference type="PROSITE-ProRule" id="PRU01266"/>
    </source>
</evidence>
<feature type="chain" id="PRO_1000124650" description="Lipoyl synthase">
    <location>
        <begin position="1"/>
        <end position="287"/>
    </location>
</feature>
<feature type="domain" description="Radical SAM core" evidence="2">
    <location>
        <begin position="46"/>
        <end position="262"/>
    </location>
</feature>
<feature type="binding site" evidence="1">
    <location>
        <position position="34"/>
    </location>
    <ligand>
        <name>[4Fe-4S] cluster</name>
        <dbReference type="ChEBI" id="CHEBI:49883"/>
        <label>1</label>
    </ligand>
</feature>
<feature type="binding site" evidence="1">
    <location>
        <position position="39"/>
    </location>
    <ligand>
        <name>[4Fe-4S] cluster</name>
        <dbReference type="ChEBI" id="CHEBI:49883"/>
        <label>1</label>
    </ligand>
</feature>
<feature type="binding site" evidence="1">
    <location>
        <position position="45"/>
    </location>
    <ligand>
        <name>[4Fe-4S] cluster</name>
        <dbReference type="ChEBI" id="CHEBI:49883"/>
        <label>1</label>
    </ligand>
</feature>
<feature type="binding site" evidence="1">
    <location>
        <position position="60"/>
    </location>
    <ligand>
        <name>[4Fe-4S] cluster</name>
        <dbReference type="ChEBI" id="CHEBI:49883"/>
        <label>2</label>
        <note>4Fe-4S-S-AdoMet</note>
    </ligand>
</feature>
<feature type="binding site" evidence="1">
    <location>
        <position position="64"/>
    </location>
    <ligand>
        <name>[4Fe-4S] cluster</name>
        <dbReference type="ChEBI" id="CHEBI:49883"/>
        <label>2</label>
        <note>4Fe-4S-S-AdoMet</note>
    </ligand>
</feature>
<feature type="binding site" evidence="1">
    <location>
        <position position="67"/>
    </location>
    <ligand>
        <name>[4Fe-4S] cluster</name>
        <dbReference type="ChEBI" id="CHEBI:49883"/>
        <label>2</label>
        <note>4Fe-4S-S-AdoMet</note>
    </ligand>
</feature>
<feature type="binding site" evidence="1">
    <location>
        <position position="273"/>
    </location>
    <ligand>
        <name>[4Fe-4S] cluster</name>
        <dbReference type="ChEBI" id="CHEBI:49883"/>
        <label>1</label>
    </ligand>
</feature>
<dbReference type="EC" id="2.8.1.8" evidence="1"/>
<dbReference type="EMBL" id="CP001391">
    <property type="protein sequence ID" value="ACN95196.1"/>
    <property type="molecule type" value="Genomic_DNA"/>
</dbReference>
<dbReference type="RefSeq" id="WP_012673150.1">
    <property type="nucleotide sequence ID" value="NZ_MKIF01000179.1"/>
</dbReference>
<dbReference type="SMR" id="C0R2Q4"/>
<dbReference type="STRING" id="66084.WRi_003970"/>
<dbReference type="KEGG" id="wri:WRi_003970"/>
<dbReference type="HOGENOM" id="CLU_033144_2_1_5"/>
<dbReference type="UniPathway" id="UPA00538">
    <property type="reaction ID" value="UER00593"/>
</dbReference>
<dbReference type="Proteomes" id="UP000001293">
    <property type="component" value="Chromosome"/>
</dbReference>
<dbReference type="GO" id="GO:0005737">
    <property type="term" value="C:cytoplasm"/>
    <property type="evidence" value="ECO:0007669"/>
    <property type="project" value="UniProtKB-SubCell"/>
</dbReference>
<dbReference type="GO" id="GO:0051539">
    <property type="term" value="F:4 iron, 4 sulfur cluster binding"/>
    <property type="evidence" value="ECO:0007669"/>
    <property type="project" value="UniProtKB-UniRule"/>
</dbReference>
<dbReference type="GO" id="GO:0016992">
    <property type="term" value="F:lipoate synthase activity"/>
    <property type="evidence" value="ECO:0007669"/>
    <property type="project" value="UniProtKB-UniRule"/>
</dbReference>
<dbReference type="GO" id="GO:0046872">
    <property type="term" value="F:metal ion binding"/>
    <property type="evidence" value="ECO:0007669"/>
    <property type="project" value="UniProtKB-KW"/>
</dbReference>
<dbReference type="CDD" id="cd01335">
    <property type="entry name" value="Radical_SAM"/>
    <property type="match status" value="1"/>
</dbReference>
<dbReference type="FunFam" id="3.20.20.70:FF:000040">
    <property type="entry name" value="Lipoyl synthase"/>
    <property type="match status" value="1"/>
</dbReference>
<dbReference type="Gene3D" id="3.20.20.70">
    <property type="entry name" value="Aldolase class I"/>
    <property type="match status" value="1"/>
</dbReference>
<dbReference type="HAMAP" id="MF_00206">
    <property type="entry name" value="Lipoyl_synth"/>
    <property type="match status" value="1"/>
</dbReference>
<dbReference type="InterPro" id="IPR013785">
    <property type="entry name" value="Aldolase_TIM"/>
</dbReference>
<dbReference type="InterPro" id="IPR006638">
    <property type="entry name" value="Elp3/MiaA/NifB-like_rSAM"/>
</dbReference>
<dbReference type="InterPro" id="IPR031691">
    <property type="entry name" value="LIAS_N"/>
</dbReference>
<dbReference type="InterPro" id="IPR003698">
    <property type="entry name" value="Lipoyl_synth"/>
</dbReference>
<dbReference type="InterPro" id="IPR007197">
    <property type="entry name" value="rSAM"/>
</dbReference>
<dbReference type="NCBIfam" id="TIGR00510">
    <property type="entry name" value="lipA"/>
    <property type="match status" value="1"/>
</dbReference>
<dbReference type="NCBIfam" id="NF004019">
    <property type="entry name" value="PRK05481.1"/>
    <property type="match status" value="1"/>
</dbReference>
<dbReference type="NCBIfam" id="NF009544">
    <property type="entry name" value="PRK12928.1"/>
    <property type="match status" value="1"/>
</dbReference>
<dbReference type="PANTHER" id="PTHR10949">
    <property type="entry name" value="LIPOYL SYNTHASE"/>
    <property type="match status" value="1"/>
</dbReference>
<dbReference type="PANTHER" id="PTHR10949:SF0">
    <property type="entry name" value="LIPOYL SYNTHASE, MITOCHONDRIAL"/>
    <property type="match status" value="1"/>
</dbReference>
<dbReference type="Pfam" id="PF16881">
    <property type="entry name" value="LIAS_N"/>
    <property type="match status" value="1"/>
</dbReference>
<dbReference type="Pfam" id="PF04055">
    <property type="entry name" value="Radical_SAM"/>
    <property type="match status" value="1"/>
</dbReference>
<dbReference type="PIRSF" id="PIRSF005963">
    <property type="entry name" value="Lipoyl_synth"/>
    <property type="match status" value="1"/>
</dbReference>
<dbReference type="SFLD" id="SFLDF00271">
    <property type="entry name" value="lipoyl_synthase"/>
    <property type="match status" value="1"/>
</dbReference>
<dbReference type="SFLD" id="SFLDG01058">
    <property type="entry name" value="lipoyl_synthase_like"/>
    <property type="match status" value="1"/>
</dbReference>
<dbReference type="SMART" id="SM00729">
    <property type="entry name" value="Elp3"/>
    <property type="match status" value="1"/>
</dbReference>
<dbReference type="SUPFAM" id="SSF102114">
    <property type="entry name" value="Radical SAM enzymes"/>
    <property type="match status" value="1"/>
</dbReference>
<dbReference type="PROSITE" id="PS51918">
    <property type="entry name" value="RADICAL_SAM"/>
    <property type="match status" value="1"/>
</dbReference>
<name>LIPA_WOLWR</name>
<accession>C0R2Q4</accession>
<gene>
    <name evidence="1" type="primary">lipA</name>
    <name type="ordered locus">WRi_003970</name>
</gene>
<protein>
    <recommendedName>
        <fullName evidence="1">Lipoyl synthase</fullName>
        <ecNumber evidence="1">2.8.1.8</ecNumber>
    </recommendedName>
    <alternativeName>
        <fullName evidence="1">Lip-syn</fullName>
        <shortName evidence="1">LS</shortName>
    </alternativeName>
    <alternativeName>
        <fullName evidence="1">Lipoate synthase</fullName>
    </alternativeName>
    <alternativeName>
        <fullName evidence="1">Lipoic acid synthase</fullName>
    </alternativeName>
    <alternativeName>
        <fullName evidence="1">Sulfur insertion protein LipA</fullName>
    </alternativeName>
</protein>
<organism>
    <name type="scientific">Wolbachia sp. subsp. Drosophila simulans (strain wRi)</name>
    <dbReference type="NCBI Taxonomy" id="66084"/>
    <lineage>
        <taxon>Bacteria</taxon>
        <taxon>Pseudomonadati</taxon>
        <taxon>Pseudomonadota</taxon>
        <taxon>Alphaproteobacteria</taxon>
        <taxon>Rickettsiales</taxon>
        <taxon>Anaplasmataceae</taxon>
        <taxon>Wolbachieae</taxon>
        <taxon>Wolbachia</taxon>
    </lineage>
</organism>
<comment type="function">
    <text evidence="1">Catalyzes the radical-mediated insertion of two sulfur atoms into the C-6 and C-8 positions of the octanoyl moiety bound to the lipoyl domains of lipoate-dependent enzymes, thereby converting the octanoylated domains into lipoylated derivatives.</text>
</comment>
<comment type="catalytic activity">
    <reaction evidence="1">
        <text>[[Fe-S] cluster scaffold protein carrying a second [4Fe-4S](2+) cluster] + N(6)-octanoyl-L-lysyl-[protein] + 2 oxidized [2Fe-2S]-[ferredoxin] + 2 S-adenosyl-L-methionine + 4 H(+) = [[Fe-S] cluster scaffold protein] + N(6)-[(R)-dihydrolipoyl]-L-lysyl-[protein] + 4 Fe(3+) + 2 hydrogen sulfide + 2 5'-deoxyadenosine + 2 L-methionine + 2 reduced [2Fe-2S]-[ferredoxin]</text>
        <dbReference type="Rhea" id="RHEA:16585"/>
        <dbReference type="Rhea" id="RHEA-COMP:9928"/>
        <dbReference type="Rhea" id="RHEA-COMP:10000"/>
        <dbReference type="Rhea" id="RHEA-COMP:10001"/>
        <dbReference type="Rhea" id="RHEA-COMP:10475"/>
        <dbReference type="Rhea" id="RHEA-COMP:14568"/>
        <dbReference type="Rhea" id="RHEA-COMP:14569"/>
        <dbReference type="ChEBI" id="CHEBI:15378"/>
        <dbReference type="ChEBI" id="CHEBI:17319"/>
        <dbReference type="ChEBI" id="CHEBI:29034"/>
        <dbReference type="ChEBI" id="CHEBI:29919"/>
        <dbReference type="ChEBI" id="CHEBI:33722"/>
        <dbReference type="ChEBI" id="CHEBI:33737"/>
        <dbReference type="ChEBI" id="CHEBI:33738"/>
        <dbReference type="ChEBI" id="CHEBI:57844"/>
        <dbReference type="ChEBI" id="CHEBI:59789"/>
        <dbReference type="ChEBI" id="CHEBI:78809"/>
        <dbReference type="ChEBI" id="CHEBI:83100"/>
        <dbReference type="EC" id="2.8.1.8"/>
    </reaction>
</comment>
<comment type="cofactor">
    <cofactor evidence="1">
        <name>[4Fe-4S] cluster</name>
        <dbReference type="ChEBI" id="CHEBI:49883"/>
    </cofactor>
    <text evidence="1">Binds 2 [4Fe-4S] clusters per subunit. One cluster is coordinated with 3 cysteines and an exchangeable S-adenosyl-L-methionine.</text>
</comment>
<comment type="pathway">
    <text evidence="1">Protein modification; protein lipoylation via endogenous pathway; protein N(6)-(lipoyl)lysine from octanoyl-[acyl-carrier-protein]: step 2/2.</text>
</comment>
<comment type="subcellular location">
    <subcellularLocation>
        <location evidence="1">Cytoplasm</location>
    </subcellularLocation>
</comment>
<comment type="similarity">
    <text evidence="1">Belongs to the radical SAM superfamily. Lipoyl synthase family.</text>
</comment>
<keyword id="KW-0004">4Fe-4S</keyword>
<keyword id="KW-0963">Cytoplasm</keyword>
<keyword id="KW-0408">Iron</keyword>
<keyword id="KW-0411">Iron-sulfur</keyword>
<keyword id="KW-0479">Metal-binding</keyword>
<keyword id="KW-0949">S-adenosyl-L-methionine</keyword>
<keyword id="KW-0808">Transferase</keyword>
<sequence length="287" mass="32531">MHSKPQWLRAKAPTGEVFNETLNIVKLHNLHTVCEEAACPNIGECWNKRHATVMILGSVCTRACAFCNVATGIPDKLDPHEPENLAKAIKKLNLKHVVITSVDRDDLPDGGANQFIQCIEEIRKITSETTIEILTPDFLNKKGAFEAIAVASPDVYNHNIETVPRLYAKIRPRARYFHSLYLLKMVKQINPKVFTKSGLMVGLGETKEEIFQVMDDLRSAEVDFITIGQYLQPTPKHAKLDRYVTPEEFEHYKYIAYSKGFLVVASSPLTRSSYHAEEDFNRLKACR</sequence>
<reference key="1">
    <citation type="journal article" date="2009" name="Proc. Natl. Acad. Sci. U.S.A.">
        <title>The mosaic genome structure of the Wolbachia wRi strain infecting Drosophila simulans.</title>
        <authorList>
            <person name="Klasson L."/>
            <person name="Westberg J."/>
            <person name="Sapountzis P."/>
            <person name="Naeslund K."/>
            <person name="Lutnaes Y."/>
            <person name="Darby A.C."/>
            <person name="Veneti Z."/>
            <person name="Chen L."/>
            <person name="Braig H.R."/>
            <person name="Garrett R."/>
            <person name="Bourtzis K."/>
            <person name="Andersson S.G."/>
        </authorList>
    </citation>
    <scope>NUCLEOTIDE SEQUENCE [LARGE SCALE GENOMIC DNA]</scope>
    <source>
        <strain>wRi</strain>
    </source>
</reference>
<proteinExistence type="inferred from homology"/>